<name>YEGS_YERPS</name>
<sequence length="296" mass="31561">MPHTLLILNGKESGNPEVREAVKNVRDEGLTLHVRITWEHGDAKRYVEEAATLAVSTVIAGGGDGTINEVATALMSLPADKRPCLGILPLGTANDFATGCNIPLQIENALQLAVKGRAVAIDLAQVNGEHYFINMATGGFGTRITTETPDKLKAALGGVSYFIHGLMRLDALKADSCKIHGPDFHWSGDALVIGIGNGKQAGGGQLLCPDALINDGLMQLRLLTAKELLPAVLSTLFNGEKNKNVIDATVPWLDITAPNDITFNLDGEPLSGRYFHIEILPHAIQCRLPPNCPLLG</sequence>
<dbReference type="EC" id="2.7.1.-" evidence="1"/>
<dbReference type="EMBL" id="BX936398">
    <property type="protein sequence ID" value="CAH22059.1"/>
    <property type="molecule type" value="Genomic_DNA"/>
</dbReference>
<dbReference type="RefSeq" id="WP_011192787.1">
    <property type="nucleotide sequence ID" value="NC_006155.1"/>
</dbReference>
<dbReference type="SMR" id="Q668B9"/>
<dbReference type="KEGG" id="ypo:BZ17_3810"/>
<dbReference type="KEGG" id="yps:YPTB2821"/>
<dbReference type="PATRIC" id="fig|273123.14.peg.3999"/>
<dbReference type="Proteomes" id="UP000001011">
    <property type="component" value="Chromosome"/>
</dbReference>
<dbReference type="GO" id="GO:0005737">
    <property type="term" value="C:cytoplasm"/>
    <property type="evidence" value="ECO:0007669"/>
    <property type="project" value="UniProtKB-SubCell"/>
</dbReference>
<dbReference type="GO" id="GO:0005886">
    <property type="term" value="C:plasma membrane"/>
    <property type="evidence" value="ECO:0007669"/>
    <property type="project" value="TreeGrafter"/>
</dbReference>
<dbReference type="GO" id="GO:0005524">
    <property type="term" value="F:ATP binding"/>
    <property type="evidence" value="ECO:0007669"/>
    <property type="project" value="UniProtKB-UniRule"/>
</dbReference>
<dbReference type="GO" id="GO:0001727">
    <property type="term" value="F:lipid kinase activity"/>
    <property type="evidence" value="ECO:0007669"/>
    <property type="project" value="UniProtKB-UniRule"/>
</dbReference>
<dbReference type="GO" id="GO:0000287">
    <property type="term" value="F:magnesium ion binding"/>
    <property type="evidence" value="ECO:0007669"/>
    <property type="project" value="UniProtKB-UniRule"/>
</dbReference>
<dbReference type="GO" id="GO:0008654">
    <property type="term" value="P:phospholipid biosynthetic process"/>
    <property type="evidence" value="ECO:0007669"/>
    <property type="project" value="UniProtKB-UniRule"/>
</dbReference>
<dbReference type="Gene3D" id="2.60.200.40">
    <property type="match status" value="1"/>
</dbReference>
<dbReference type="Gene3D" id="3.40.50.10330">
    <property type="entry name" value="Probable inorganic polyphosphate/atp-NAD kinase, domain 1"/>
    <property type="match status" value="1"/>
</dbReference>
<dbReference type="HAMAP" id="MF_01377">
    <property type="entry name" value="YegS"/>
    <property type="match status" value="1"/>
</dbReference>
<dbReference type="InterPro" id="IPR017438">
    <property type="entry name" value="ATP-NAD_kinase_N"/>
</dbReference>
<dbReference type="InterPro" id="IPR005218">
    <property type="entry name" value="Diacylglycerol/lipid_kinase"/>
</dbReference>
<dbReference type="InterPro" id="IPR001206">
    <property type="entry name" value="Diacylglycerol_kinase_cat_dom"/>
</dbReference>
<dbReference type="InterPro" id="IPR022433">
    <property type="entry name" value="Lip_kinase_YegS"/>
</dbReference>
<dbReference type="InterPro" id="IPR050187">
    <property type="entry name" value="Lipid_Phosphate_FormReg"/>
</dbReference>
<dbReference type="InterPro" id="IPR016064">
    <property type="entry name" value="NAD/diacylglycerol_kinase_sf"/>
</dbReference>
<dbReference type="InterPro" id="IPR045540">
    <property type="entry name" value="YegS/DAGK_C"/>
</dbReference>
<dbReference type="NCBIfam" id="TIGR03702">
    <property type="entry name" value="lip_kinase_YegS"/>
    <property type="match status" value="1"/>
</dbReference>
<dbReference type="NCBIfam" id="NF009602">
    <property type="entry name" value="PRK13054.1"/>
    <property type="match status" value="1"/>
</dbReference>
<dbReference type="NCBIfam" id="TIGR00147">
    <property type="entry name" value="YegS/Rv2252/BmrU family lipid kinase"/>
    <property type="match status" value="1"/>
</dbReference>
<dbReference type="PANTHER" id="PTHR12358:SF106">
    <property type="entry name" value="LIPID KINASE YEGS"/>
    <property type="match status" value="1"/>
</dbReference>
<dbReference type="PANTHER" id="PTHR12358">
    <property type="entry name" value="SPHINGOSINE KINASE"/>
    <property type="match status" value="1"/>
</dbReference>
<dbReference type="Pfam" id="PF00781">
    <property type="entry name" value="DAGK_cat"/>
    <property type="match status" value="1"/>
</dbReference>
<dbReference type="Pfam" id="PF19279">
    <property type="entry name" value="YegS_C"/>
    <property type="match status" value="1"/>
</dbReference>
<dbReference type="SMART" id="SM00046">
    <property type="entry name" value="DAGKc"/>
    <property type="match status" value="1"/>
</dbReference>
<dbReference type="SUPFAM" id="SSF111331">
    <property type="entry name" value="NAD kinase/diacylglycerol kinase-like"/>
    <property type="match status" value="1"/>
</dbReference>
<dbReference type="PROSITE" id="PS50146">
    <property type="entry name" value="DAGK"/>
    <property type="match status" value="1"/>
</dbReference>
<comment type="function">
    <text evidence="1">Probably phosphorylates lipids; the in vivo substrate is unknown.</text>
</comment>
<comment type="cofactor">
    <cofactor evidence="1">
        <name>Mg(2+)</name>
        <dbReference type="ChEBI" id="CHEBI:18420"/>
    </cofactor>
    <cofactor evidence="1">
        <name>Ca(2+)</name>
        <dbReference type="ChEBI" id="CHEBI:29108"/>
    </cofactor>
    <text evidence="1">Binds 1 Mg(2+) ion per subunit. Ca(2+) may be able to substitute.</text>
</comment>
<comment type="subcellular location">
    <subcellularLocation>
        <location evidence="1">Cytoplasm</location>
    </subcellularLocation>
</comment>
<comment type="similarity">
    <text evidence="1">Belongs to the diacylglycerol/lipid kinase family. YegS lipid kinase subfamily.</text>
</comment>
<accession>Q668B9</accession>
<organism>
    <name type="scientific">Yersinia pseudotuberculosis serotype I (strain IP32953)</name>
    <dbReference type="NCBI Taxonomy" id="273123"/>
    <lineage>
        <taxon>Bacteria</taxon>
        <taxon>Pseudomonadati</taxon>
        <taxon>Pseudomonadota</taxon>
        <taxon>Gammaproteobacteria</taxon>
        <taxon>Enterobacterales</taxon>
        <taxon>Yersiniaceae</taxon>
        <taxon>Yersinia</taxon>
    </lineage>
</organism>
<keyword id="KW-0067">ATP-binding</keyword>
<keyword id="KW-0963">Cytoplasm</keyword>
<keyword id="KW-0418">Kinase</keyword>
<keyword id="KW-0444">Lipid biosynthesis</keyword>
<keyword id="KW-0443">Lipid metabolism</keyword>
<keyword id="KW-0460">Magnesium</keyword>
<keyword id="KW-0479">Metal-binding</keyword>
<keyword id="KW-0547">Nucleotide-binding</keyword>
<keyword id="KW-0594">Phospholipid biosynthesis</keyword>
<keyword id="KW-1208">Phospholipid metabolism</keyword>
<keyword id="KW-0808">Transferase</keyword>
<protein>
    <recommendedName>
        <fullName evidence="1">Probable lipid kinase YegS-like</fullName>
        <ecNumber evidence="1">2.7.1.-</ecNumber>
    </recommendedName>
</protein>
<reference key="1">
    <citation type="journal article" date="2004" name="Proc. Natl. Acad. Sci. U.S.A.">
        <title>Insights into the evolution of Yersinia pestis through whole-genome comparison with Yersinia pseudotuberculosis.</title>
        <authorList>
            <person name="Chain P.S.G."/>
            <person name="Carniel E."/>
            <person name="Larimer F.W."/>
            <person name="Lamerdin J."/>
            <person name="Stoutland P.O."/>
            <person name="Regala W.M."/>
            <person name="Georgescu A.M."/>
            <person name="Vergez L.M."/>
            <person name="Land M.L."/>
            <person name="Motin V.L."/>
            <person name="Brubaker R.R."/>
            <person name="Fowler J."/>
            <person name="Hinnebusch J."/>
            <person name="Marceau M."/>
            <person name="Medigue C."/>
            <person name="Simonet M."/>
            <person name="Chenal-Francisque V."/>
            <person name="Souza B."/>
            <person name="Dacheux D."/>
            <person name="Elliott J.M."/>
            <person name="Derbise A."/>
            <person name="Hauser L.J."/>
            <person name="Garcia E."/>
        </authorList>
    </citation>
    <scope>NUCLEOTIDE SEQUENCE [LARGE SCALE GENOMIC DNA]</scope>
    <source>
        <strain>IP32953</strain>
    </source>
</reference>
<feature type="chain" id="PRO_0000292174" description="Probable lipid kinase YegS-like">
    <location>
        <begin position="1"/>
        <end position="296"/>
    </location>
</feature>
<feature type="domain" description="DAGKc" evidence="1">
    <location>
        <begin position="1"/>
        <end position="130"/>
    </location>
</feature>
<feature type="active site" description="Proton acceptor" evidence="1">
    <location>
        <position position="268"/>
    </location>
</feature>
<feature type="binding site" evidence="1">
    <location>
        <position position="37"/>
    </location>
    <ligand>
        <name>ATP</name>
        <dbReference type="ChEBI" id="CHEBI:30616"/>
    </ligand>
</feature>
<feature type="binding site" evidence="1">
    <location>
        <begin position="63"/>
        <end position="69"/>
    </location>
    <ligand>
        <name>ATP</name>
        <dbReference type="ChEBI" id="CHEBI:30616"/>
    </ligand>
</feature>
<feature type="binding site" evidence="1">
    <location>
        <position position="92"/>
    </location>
    <ligand>
        <name>ATP</name>
        <dbReference type="ChEBI" id="CHEBI:30616"/>
    </ligand>
</feature>
<feature type="binding site" evidence="1">
    <location>
        <position position="212"/>
    </location>
    <ligand>
        <name>Mg(2+)</name>
        <dbReference type="ChEBI" id="CHEBI:18420"/>
    </ligand>
</feature>
<feature type="binding site" evidence="1">
    <location>
        <position position="215"/>
    </location>
    <ligand>
        <name>Mg(2+)</name>
        <dbReference type="ChEBI" id="CHEBI:18420"/>
    </ligand>
</feature>
<feature type="binding site" evidence="1">
    <location>
        <position position="217"/>
    </location>
    <ligand>
        <name>Mg(2+)</name>
        <dbReference type="ChEBI" id="CHEBI:18420"/>
    </ligand>
</feature>
<gene>
    <name type="ordered locus">YPTB2821</name>
</gene>
<evidence type="ECO:0000255" key="1">
    <source>
        <dbReference type="HAMAP-Rule" id="MF_01377"/>
    </source>
</evidence>
<proteinExistence type="inferred from homology"/>